<dbReference type="EC" id="6.3.1.1" evidence="1"/>
<dbReference type="EMBL" id="CP001215">
    <property type="protein sequence ID" value="ACP17150.1"/>
    <property type="molecule type" value="Genomic_DNA"/>
</dbReference>
<dbReference type="RefSeq" id="WP_000284908.1">
    <property type="nucleotide sequence ID" value="NC_012581.1"/>
</dbReference>
<dbReference type="SMR" id="C3L6U1"/>
<dbReference type="GeneID" id="69532735"/>
<dbReference type="KEGG" id="bah:BAMEG_2785"/>
<dbReference type="HOGENOM" id="CLU_071543_0_0_9"/>
<dbReference type="UniPathway" id="UPA00134">
    <property type="reaction ID" value="UER00194"/>
</dbReference>
<dbReference type="GO" id="GO:0005829">
    <property type="term" value="C:cytosol"/>
    <property type="evidence" value="ECO:0007669"/>
    <property type="project" value="TreeGrafter"/>
</dbReference>
<dbReference type="GO" id="GO:0004071">
    <property type="term" value="F:aspartate-ammonia ligase activity"/>
    <property type="evidence" value="ECO:0007669"/>
    <property type="project" value="UniProtKB-UniRule"/>
</dbReference>
<dbReference type="GO" id="GO:0005524">
    <property type="term" value="F:ATP binding"/>
    <property type="evidence" value="ECO:0007669"/>
    <property type="project" value="UniProtKB-UniRule"/>
</dbReference>
<dbReference type="GO" id="GO:0140096">
    <property type="term" value="F:catalytic activity, acting on a protein"/>
    <property type="evidence" value="ECO:0007669"/>
    <property type="project" value="UniProtKB-ARBA"/>
</dbReference>
<dbReference type="GO" id="GO:0016740">
    <property type="term" value="F:transferase activity"/>
    <property type="evidence" value="ECO:0007669"/>
    <property type="project" value="UniProtKB-ARBA"/>
</dbReference>
<dbReference type="GO" id="GO:0070981">
    <property type="term" value="P:L-asparagine biosynthetic process"/>
    <property type="evidence" value="ECO:0007669"/>
    <property type="project" value="UniProtKB-UniRule"/>
</dbReference>
<dbReference type="CDD" id="cd00645">
    <property type="entry name" value="AsnA"/>
    <property type="match status" value="1"/>
</dbReference>
<dbReference type="Gene3D" id="3.30.930.10">
    <property type="entry name" value="Bira Bifunctional Protein, Domain 2"/>
    <property type="match status" value="1"/>
</dbReference>
<dbReference type="HAMAP" id="MF_00555">
    <property type="entry name" value="AsnA"/>
    <property type="match status" value="1"/>
</dbReference>
<dbReference type="InterPro" id="IPR006195">
    <property type="entry name" value="aa-tRNA-synth_II"/>
</dbReference>
<dbReference type="InterPro" id="IPR045864">
    <property type="entry name" value="aa-tRNA-synth_II/BPL/LPL"/>
</dbReference>
<dbReference type="InterPro" id="IPR004618">
    <property type="entry name" value="AsnA"/>
</dbReference>
<dbReference type="NCBIfam" id="TIGR00669">
    <property type="entry name" value="asnA"/>
    <property type="match status" value="1"/>
</dbReference>
<dbReference type="PANTHER" id="PTHR30073">
    <property type="entry name" value="ASPARTATE--AMMONIA LIGASE"/>
    <property type="match status" value="1"/>
</dbReference>
<dbReference type="PANTHER" id="PTHR30073:SF5">
    <property type="entry name" value="ASPARTATE--AMMONIA LIGASE"/>
    <property type="match status" value="1"/>
</dbReference>
<dbReference type="Pfam" id="PF03590">
    <property type="entry name" value="AsnA"/>
    <property type="match status" value="1"/>
</dbReference>
<dbReference type="PIRSF" id="PIRSF001555">
    <property type="entry name" value="Asp_ammon_ligase"/>
    <property type="match status" value="1"/>
</dbReference>
<dbReference type="SUPFAM" id="SSF55681">
    <property type="entry name" value="Class II aaRS and biotin synthetases"/>
    <property type="match status" value="1"/>
</dbReference>
<dbReference type="PROSITE" id="PS50862">
    <property type="entry name" value="AA_TRNA_LIGASE_II"/>
    <property type="match status" value="1"/>
</dbReference>
<keyword id="KW-0028">Amino-acid biosynthesis</keyword>
<keyword id="KW-0061">Asparagine biosynthesis</keyword>
<keyword id="KW-0067">ATP-binding</keyword>
<keyword id="KW-0963">Cytoplasm</keyword>
<keyword id="KW-0436">Ligase</keyword>
<keyword id="KW-0547">Nucleotide-binding</keyword>
<protein>
    <recommendedName>
        <fullName evidence="1">Aspartate--ammonia ligase</fullName>
        <ecNumber evidence="1">6.3.1.1</ecNumber>
    </recommendedName>
    <alternativeName>
        <fullName evidence="1">Asparagine synthetase A</fullName>
    </alternativeName>
</protein>
<proteinExistence type="inferred from homology"/>
<comment type="catalytic activity">
    <reaction evidence="1">
        <text>L-aspartate + NH4(+) + ATP = L-asparagine + AMP + diphosphate + H(+)</text>
        <dbReference type="Rhea" id="RHEA:11372"/>
        <dbReference type="ChEBI" id="CHEBI:15378"/>
        <dbReference type="ChEBI" id="CHEBI:28938"/>
        <dbReference type="ChEBI" id="CHEBI:29991"/>
        <dbReference type="ChEBI" id="CHEBI:30616"/>
        <dbReference type="ChEBI" id="CHEBI:33019"/>
        <dbReference type="ChEBI" id="CHEBI:58048"/>
        <dbReference type="ChEBI" id="CHEBI:456215"/>
        <dbReference type="EC" id="6.3.1.1"/>
    </reaction>
</comment>
<comment type="pathway">
    <text evidence="1">Amino-acid biosynthesis; L-asparagine biosynthesis; L-asparagine from L-aspartate (ammonia route): step 1/1.</text>
</comment>
<comment type="subcellular location">
    <subcellularLocation>
        <location evidence="1">Cytoplasm</location>
    </subcellularLocation>
</comment>
<comment type="similarity">
    <text evidence="1">Belongs to the class-II aminoacyl-tRNA synthetase family. AsnA subfamily.</text>
</comment>
<gene>
    <name evidence="1" type="primary">asnA</name>
    <name type="ordered locus">BAMEG_2785</name>
</gene>
<feature type="chain" id="PRO_1000146688" description="Aspartate--ammonia ligase">
    <location>
        <begin position="1"/>
        <end position="327"/>
    </location>
</feature>
<evidence type="ECO:0000255" key="1">
    <source>
        <dbReference type="HAMAP-Rule" id="MF_00555"/>
    </source>
</evidence>
<organism>
    <name type="scientific">Bacillus anthracis (strain CDC 684 / NRRL 3495)</name>
    <dbReference type="NCBI Taxonomy" id="568206"/>
    <lineage>
        <taxon>Bacteria</taxon>
        <taxon>Bacillati</taxon>
        <taxon>Bacillota</taxon>
        <taxon>Bacilli</taxon>
        <taxon>Bacillales</taxon>
        <taxon>Bacillaceae</taxon>
        <taxon>Bacillus</taxon>
        <taxon>Bacillus cereus group</taxon>
    </lineage>
</organism>
<accession>C3L6U1</accession>
<sequence>MYQSLMTVRETQIAIKEVKTFFEDQLAKRLELFRVSAPLFVTKKSGLNDHLNGVERPIEFDMLHSGEELEIVHSLAKWKRFALHEYGYEAGEGLYTNMNAIRRDEELDATHSIYVDQWDWEKIVQKEWRTVDYLQKTVLTIYGIFKDLEDHLFEKYPFLGKYLPEEIVFVTSQELEDKYPELTPKDREHAIAKEHGAVFIIGIGDALRSGEKHDGRAADYDDWKLNGDILFWHPVLQSSFELSSMGIRVDSKSLDEQLTKTGEDFKREYDFHKGILEDVLPLTIGGGIGQSRMCMYFLRKAHIGEVQSSVWPDDLREACKKENIHLF</sequence>
<reference key="1">
    <citation type="submission" date="2008-10" db="EMBL/GenBank/DDBJ databases">
        <title>Genome sequence of Bacillus anthracis str. CDC 684.</title>
        <authorList>
            <person name="Dodson R.J."/>
            <person name="Munk A.C."/>
            <person name="Brettin T."/>
            <person name="Bruce D."/>
            <person name="Detter C."/>
            <person name="Tapia R."/>
            <person name="Han C."/>
            <person name="Sutton G."/>
            <person name="Sims D."/>
        </authorList>
    </citation>
    <scope>NUCLEOTIDE SEQUENCE [LARGE SCALE GENOMIC DNA]</scope>
    <source>
        <strain>CDC 684 / NRRL 3495</strain>
    </source>
</reference>
<name>ASNA_BACAC</name>